<gene>
    <name evidence="1" type="primary">cbiD</name>
    <name type="ordered locus">CTC_00733</name>
</gene>
<protein>
    <recommendedName>
        <fullName evidence="1">Cobalt-precorrin-5B C(1)-methyltransferase</fullName>
        <ecNumber evidence="1">2.1.1.195</ecNumber>
    </recommendedName>
    <alternativeName>
        <fullName evidence="1">Cobalt-precorrin-6A synthase</fullName>
    </alternativeName>
</protein>
<reference key="1">
    <citation type="journal article" date="2003" name="Proc. Natl. Acad. Sci. U.S.A.">
        <title>The genome sequence of Clostridium tetani, the causative agent of tetanus disease.</title>
        <authorList>
            <person name="Brueggemann H."/>
            <person name="Baeumer S."/>
            <person name="Fricke W.F."/>
            <person name="Wiezer A."/>
            <person name="Liesegang H."/>
            <person name="Decker I."/>
            <person name="Herzberg C."/>
            <person name="Martinez-Arias R."/>
            <person name="Merkl R."/>
            <person name="Henne A."/>
            <person name="Gottschalk G."/>
        </authorList>
    </citation>
    <scope>NUCLEOTIDE SEQUENCE [LARGE SCALE GENOMIC DNA]</scope>
    <source>
        <strain>Massachusetts / E88</strain>
    </source>
</reference>
<name>CBID_CLOTE</name>
<keyword id="KW-0169">Cobalamin biosynthesis</keyword>
<keyword id="KW-0489">Methyltransferase</keyword>
<keyword id="KW-1185">Reference proteome</keyword>
<keyword id="KW-0949">S-adenosyl-L-methionine</keyword>
<keyword id="KW-0808">Transferase</keyword>
<organism>
    <name type="scientific">Clostridium tetani (strain Massachusetts / E88)</name>
    <dbReference type="NCBI Taxonomy" id="212717"/>
    <lineage>
        <taxon>Bacteria</taxon>
        <taxon>Bacillati</taxon>
        <taxon>Bacillota</taxon>
        <taxon>Clostridia</taxon>
        <taxon>Eubacteriales</taxon>
        <taxon>Clostridiaceae</taxon>
        <taxon>Clostridium</taxon>
    </lineage>
</organism>
<accession>Q897K1</accession>
<dbReference type="EC" id="2.1.1.195" evidence="1"/>
<dbReference type="EMBL" id="AE015927">
    <property type="protein sequence ID" value="AAO35335.1"/>
    <property type="status" value="ALT_INIT"/>
    <property type="molecule type" value="Genomic_DNA"/>
</dbReference>
<dbReference type="RefSeq" id="WP_035110292.1">
    <property type="nucleotide sequence ID" value="NC_004557.1"/>
</dbReference>
<dbReference type="SMR" id="Q897K1"/>
<dbReference type="STRING" id="212717.CTC_00733"/>
<dbReference type="GeneID" id="24252901"/>
<dbReference type="KEGG" id="ctc:CTC_00733"/>
<dbReference type="HOGENOM" id="CLU_041273_1_0_9"/>
<dbReference type="OrthoDB" id="6439987at2"/>
<dbReference type="UniPathway" id="UPA00148">
    <property type="reaction ID" value="UER00227"/>
</dbReference>
<dbReference type="Proteomes" id="UP000001412">
    <property type="component" value="Chromosome"/>
</dbReference>
<dbReference type="GO" id="GO:0043780">
    <property type="term" value="F:cobalt-precorrin-5B C1-methyltransferase activity"/>
    <property type="evidence" value="ECO:0007669"/>
    <property type="project" value="RHEA"/>
</dbReference>
<dbReference type="GO" id="GO:0019251">
    <property type="term" value="P:anaerobic cobalamin biosynthetic process"/>
    <property type="evidence" value="ECO:0007669"/>
    <property type="project" value="UniProtKB-UniRule"/>
</dbReference>
<dbReference type="GO" id="GO:0032259">
    <property type="term" value="P:methylation"/>
    <property type="evidence" value="ECO:0007669"/>
    <property type="project" value="UniProtKB-KW"/>
</dbReference>
<dbReference type="Gene3D" id="3.30.2110.10">
    <property type="entry name" value="CbiD-like"/>
    <property type="match status" value="1"/>
</dbReference>
<dbReference type="HAMAP" id="MF_00787">
    <property type="entry name" value="CbiD"/>
    <property type="match status" value="1"/>
</dbReference>
<dbReference type="InterPro" id="IPR002748">
    <property type="entry name" value="CbiD"/>
</dbReference>
<dbReference type="InterPro" id="IPR036074">
    <property type="entry name" value="CbiD_sf"/>
</dbReference>
<dbReference type="NCBIfam" id="TIGR00312">
    <property type="entry name" value="cbiD"/>
    <property type="match status" value="1"/>
</dbReference>
<dbReference type="PANTHER" id="PTHR35863">
    <property type="entry name" value="COBALT-PRECORRIN-5B C(1)-METHYLTRANSFERASE"/>
    <property type="match status" value="1"/>
</dbReference>
<dbReference type="PANTHER" id="PTHR35863:SF1">
    <property type="entry name" value="COBALT-PRECORRIN-5B C(1)-METHYLTRANSFERASE"/>
    <property type="match status" value="1"/>
</dbReference>
<dbReference type="Pfam" id="PF01888">
    <property type="entry name" value="CbiD"/>
    <property type="match status" value="1"/>
</dbReference>
<dbReference type="PIRSF" id="PIRSF026782">
    <property type="entry name" value="CbiD"/>
    <property type="match status" value="1"/>
</dbReference>
<dbReference type="SUPFAM" id="SSF111342">
    <property type="entry name" value="CbiD-like"/>
    <property type="match status" value="1"/>
</dbReference>
<sequence length="356" mass="39050">MLDMYVMVDGKKLRCGYTTGSCATAAAKAATIMLYNKEKLKTIDIDTPKGVRLHLDIEKINIGENYVECCIIKDGGDDPDATHGMEIWARAEKKDDGYTLKGGKGVGVVMGEGLYVAKGEPAINPVPRTMIESEVKSVLPKDRGVEITIFAPEGKKVAKKTFNPRLNIIGGISILGTSGIVMPMSEESLKQSVELEIRQKIANGHKDLILVFGNIGERKGMEMGLDQSKMVSISNYVGFALDCCRGNGVKDITLVGHIGKMCKIAAGCFNTHSRVADVRLEVLALELALMGYDIDLVKDVYNQKTTEGAVKFLGEGYDELYKRIAEKIAKRIEIYSYGEISPKILMFSMEKILFSE</sequence>
<proteinExistence type="inferred from homology"/>
<feature type="chain" id="PRO_0000141663" description="Cobalt-precorrin-5B C(1)-methyltransferase">
    <location>
        <begin position="1"/>
        <end position="356"/>
    </location>
</feature>
<evidence type="ECO:0000255" key="1">
    <source>
        <dbReference type="HAMAP-Rule" id="MF_00787"/>
    </source>
</evidence>
<evidence type="ECO:0000305" key="2"/>
<comment type="function">
    <text evidence="1">Catalyzes the methylation of C-1 in cobalt-precorrin-5B to form cobalt-precorrin-6A.</text>
</comment>
<comment type="catalytic activity">
    <reaction evidence="1">
        <text>Co-precorrin-5B + S-adenosyl-L-methionine = Co-precorrin-6A + S-adenosyl-L-homocysteine</text>
        <dbReference type="Rhea" id="RHEA:26285"/>
        <dbReference type="ChEBI" id="CHEBI:57856"/>
        <dbReference type="ChEBI" id="CHEBI:59789"/>
        <dbReference type="ChEBI" id="CHEBI:60063"/>
        <dbReference type="ChEBI" id="CHEBI:60064"/>
        <dbReference type="EC" id="2.1.1.195"/>
    </reaction>
</comment>
<comment type="pathway">
    <text evidence="1">Cofactor biosynthesis; adenosylcobalamin biosynthesis; cob(II)yrinate a,c-diamide from sirohydrochlorin (anaerobic route): step 6/10.</text>
</comment>
<comment type="similarity">
    <text evidence="1">Belongs to the CbiD family.</text>
</comment>
<comment type="sequence caution" evidence="2">
    <conflict type="erroneous initiation">
        <sequence resource="EMBL-CDS" id="AAO35335"/>
    </conflict>
</comment>